<evidence type="ECO:0000250" key="1">
    <source>
        <dbReference type="UniProtKB" id="Q8TBE7"/>
    </source>
</evidence>
<evidence type="ECO:0000255" key="2"/>
<evidence type="ECO:0000256" key="3">
    <source>
        <dbReference type="SAM" id="MobiDB-lite"/>
    </source>
</evidence>
<evidence type="ECO:0000305" key="4"/>
<evidence type="ECO:0007744" key="5">
    <source>
    </source>
</evidence>
<reference key="1">
    <citation type="journal article" date="2004" name="Genome Res.">
        <title>The status, quality, and expansion of the NIH full-length cDNA project: the Mammalian Gene Collection (MGC).</title>
        <authorList>
            <consortium name="The MGC Project Team"/>
        </authorList>
    </citation>
    <scope>NUCLEOTIDE SEQUENCE [LARGE SCALE MRNA]</scope>
    <source>
        <tissue>Brain</tissue>
    </source>
</reference>
<reference key="2">
    <citation type="journal article" date="2012" name="Nat. Commun.">
        <title>Quantitative maps of protein phosphorylation sites across 14 different rat organs and tissues.</title>
        <authorList>
            <person name="Lundby A."/>
            <person name="Secher A."/>
            <person name="Lage K."/>
            <person name="Nordsborg N.B."/>
            <person name="Dmytriyev A."/>
            <person name="Lundby C."/>
            <person name="Olsen J.V."/>
        </authorList>
    </citation>
    <scope>PHOSPHORYLATION [LARGE SCALE ANALYSIS] AT SER-409</scope>
    <scope>IDENTIFICATION BY MASS SPECTROMETRY [LARGE SCALE ANALYSIS]</scope>
</reference>
<gene>
    <name type="primary">Slc35g2</name>
    <name type="synonym">Tmem22</name>
</gene>
<proteinExistence type="evidence at protein level"/>
<keyword id="KW-1003">Cell membrane</keyword>
<keyword id="KW-0968">Cytoplasmic vesicle</keyword>
<keyword id="KW-0472">Membrane</keyword>
<keyword id="KW-0597">Phosphoprotein</keyword>
<keyword id="KW-1185">Reference proteome</keyword>
<keyword id="KW-0677">Repeat</keyword>
<keyword id="KW-0770">Synapse</keyword>
<keyword id="KW-0812">Transmembrane</keyword>
<keyword id="KW-1133">Transmembrane helix</keyword>
<dbReference type="EMBL" id="BC088758">
    <property type="protein sequence ID" value="AAH88758.1"/>
    <property type="molecule type" value="mRNA"/>
</dbReference>
<dbReference type="RefSeq" id="NP_001012126.1">
    <property type="nucleotide sequence ID" value="NM_001012126.2"/>
</dbReference>
<dbReference type="RefSeq" id="NP_001380771.1">
    <property type="nucleotide sequence ID" value="NM_001393842.1"/>
</dbReference>
<dbReference type="RefSeq" id="XP_006243692.1">
    <property type="nucleotide sequence ID" value="XM_006243630.3"/>
</dbReference>
<dbReference type="RefSeq" id="XP_017451168.1">
    <property type="nucleotide sequence ID" value="XM_017595679.1"/>
</dbReference>
<dbReference type="SMR" id="Q5M7A3"/>
<dbReference type="FunCoup" id="Q5M7A3">
    <property type="interactions" value="955"/>
</dbReference>
<dbReference type="STRING" id="10116.ENSRNOP00000020610"/>
<dbReference type="iPTMnet" id="Q5M7A3"/>
<dbReference type="PhosphoSitePlus" id="Q5M7A3"/>
<dbReference type="PaxDb" id="10116-ENSRNOP00000020610"/>
<dbReference type="Ensembl" id="ENSRNOT00000020610.8">
    <property type="protein sequence ID" value="ENSRNOP00000020610.4"/>
    <property type="gene ID" value="ENSRNOG00000015370.8"/>
</dbReference>
<dbReference type="Ensembl" id="ENSRNOT00000110639.1">
    <property type="protein sequence ID" value="ENSRNOP00000078957.1"/>
    <property type="gene ID" value="ENSRNOG00000015370.8"/>
</dbReference>
<dbReference type="GeneID" id="315957"/>
<dbReference type="KEGG" id="rno:315957"/>
<dbReference type="UCSC" id="RGD:1306109">
    <property type="organism name" value="rat"/>
</dbReference>
<dbReference type="AGR" id="RGD:1306109"/>
<dbReference type="CTD" id="80723"/>
<dbReference type="RGD" id="1306109">
    <property type="gene designation" value="Slc35g2"/>
</dbReference>
<dbReference type="eggNOG" id="ENOG502QV4H">
    <property type="taxonomic scope" value="Eukaryota"/>
</dbReference>
<dbReference type="GeneTree" id="ENSGT00940000153249"/>
<dbReference type="HOGENOM" id="CLU_055637_0_0_1"/>
<dbReference type="InParanoid" id="Q5M7A3"/>
<dbReference type="OMA" id="CYHHEPP"/>
<dbReference type="OrthoDB" id="306876at2759"/>
<dbReference type="PhylomeDB" id="Q5M7A3"/>
<dbReference type="TreeFam" id="TF331838"/>
<dbReference type="PRO" id="PR:Q5M7A3"/>
<dbReference type="Proteomes" id="UP000002494">
    <property type="component" value="Chromosome 8"/>
</dbReference>
<dbReference type="Bgee" id="ENSRNOG00000015370">
    <property type="expression patterns" value="Expressed in cerebellum and 11 other cell types or tissues"/>
</dbReference>
<dbReference type="GO" id="GO:0005794">
    <property type="term" value="C:Golgi apparatus"/>
    <property type="evidence" value="ECO:0007669"/>
    <property type="project" value="Ensembl"/>
</dbReference>
<dbReference type="GO" id="GO:0005886">
    <property type="term" value="C:plasma membrane"/>
    <property type="evidence" value="ECO:0000318"/>
    <property type="project" value="GO_Central"/>
</dbReference>
<dbReference type="GO" id="GO:0030672">
    <property type="term" value="C:synaptic vesicle membrane"/>
    <property type="evidence" value="ECO:0000266"/>
    <property type="project" value="RGD"/>
</dbReference>
<dbReference type="InterPro" id="IPR000620">
    <property type="entry name" value="EamA_dom"/>
</dbReference>
<dbReference type="PANTHER" id="PTHR22911">
    <property type="entry name" value="ACYL-MALONYL CONDENSING ENZYME-RELATED"/>
    <property type="match status" value="1"/>
</dbReference>
<dbReference type="PANTHER" id="PTHR22911:SF52">
    <property type="entry name" value="SOLUTE CARRIER FAMILY 35 MEMBER G2"/>
    <property type="match status" value="1"/>
</dbReference>
<dbReference type="Pfam" id="PF00892">
    <property type="entry name" value="EamA"/>
    <property type="match status" value="2"/>
</dbReference>
<dbReference type="SUPFAM" id="SSF103481">
    <property type="entry name" value="Multidrug resistance efflux transporter EmrE"/>
    <property type="match status" value="2"/>
</dbReference>
<name>S35G2_RAT</name>
<sequence>MDTSPSKKYPIKKRVKIHPNTVMVKYTSHYPQPGEDGYEEINEDYGRFMEENPKKSLLSEMRRKGRTLFGTMDTQPPRSEDPRASSRGQFQSFAEKNIFQSRKMWLVLFGSALAHGCVALITRLVSDRSKVPSLELIFIRSVLQVLSVIVVCYYQEAPFGPSGYRLRLFLYGVCNVISITCAYTSFSIVPPSNGTTMWRATTTVFSAVLAFLLVDEKMAYVDMATVVCSILGVCLVMIPNIADEDNSLLNVWKEAFGYTMTVMAGLTTALSMIVYRSIREKISMWTALFTFGWTGTIWGLSTMFVLQEPIIPLDGETWSYLIAICICSTVAFLGVYYALDKFHPALVSTVQHLEIVVAMVLQLLVLHIFPSVYDVFGGVIIMISVFVLAGYKLYWRNVRREDYQEILDSPIK</sequence>
<accession>Q5M7A3</accession>
<feature type="chain" id="PRO_0000244466" description="Solute carrier family 35 member G2">
    <location>
        <begin position="1"/>
        <end position="412"/>
    </location>
</feature>
<feature type="transmembrane region" description="Helical" evidence="2">
    <location>
        <begin position="105"/>
        <end position="125"/>
    </location>
</feature>
<feature type="transmembrane region" description="Helical" evidence="2">
    <location>
        <begin position="131"/>
        <end position="151"/>
    </location>
</feature>
<feature type="transmembrane region" description="Helical" evidence="2">
    <location>
        <begin position="169"/>
        <end position="189"/>
    </location>
</feature>
<feature type="transmembrane region" description="Helical" evidence="2">
    <location>
        <begin position="194"/>
        <end position="214"/>
    </location>
</feature>
<feature type="transmembrane region" description="Helical" evidence="2">
    <location>
        <begin position="218"/>
        <end position="238"/>
    </location>
</feature>
<feature type="transmembrane region" description="Helical" evidence="2">
    <location>
        <begin position="255"/>
        <end position="275"/>
    </location>
</feature>
<feature type="transmembrane region" description="Helical" evidence="2">
    <location>
        <begin position="286"/>
        <end position="306"/>
    </location>
</feature>
<feature type="transmembrane region" description="Helical" evidence="2">
    <location>
        <begin position="319"/>
        <end position="339"/>
    </location>
</feature>
<feature type="transmembrane region" description="Helical" evidence="2">
    <location>
        <begin position="346"/>
        <end position="366"/>
    </location>
</feature>
<feature type="transmembrane region" description="Helical" evidence="2">
    <location>
        <begin position="368"/>
        <end position="388"/>
    </location>
</feature>
<feature type="domain" description="EamA 1">
    <location>
        <begin position="113"/>
        <end position="238"/>
    </location>
</feature>
<feature type="domain" description="EamA 2">
    <location>
        <begin position="266"/>
        <end position="390"/>
    </location>
</feature>
<feature type="region of interest" description="Disordered" evidence="3">
    <location>
        <begin position="68"/>
        <end position="88"/>
    </location>
</feature>
<feature type="modified residue" description="Phosphoserine" evidence="5">
    <location>
        <position position="409"/>
    </location>
</feature>
<organism>
    <name type="scientific">Rattus norvegicus</name>
    <name type="common">Rat</name>
    <dbReference type="NCBI Taxonomy" id="10116"/>
    <lineage>
        <taxon>Eukaryota</taxon>
        <taxon>Metazoa</taxon>
        <taxon>Chordata</taxon>
        <taxon>Craniata</taxon>
        <taxon>Vertebrata</taxon>
        <taxon>Euteleostomi</taxon>
        <taxon>Mammalia</taxon>
        <taxon>Eutheria</taxon>
        <taxon>Euarchontoglires</taxon>
        <taxon>Glires</taxon>
        <taxon>Rodentia</taxon>
        <taxon>Myomorpha</taxon>
        <taxon>Muroidea</taxon>
        <taxon>Muridae</taxon>
        <taxon>Murinae</taxon>
        <taxon>Rattus</taxon>
    </lineage>
</organism>
<comment type="subcellular location">
    <subcellularLocation>
        <location evidence="1">Cell membrane</location>
        <topology evidence="1">Multi-pass membrane protein</topology>
    </subcellularLocation>
    <subcellularLocation>
        <location evidence="1">Cytoplasmic vesicle</location>
        <location evidence="1">Secretory vesicle</location>
        <location evidence="1">Synaptic vesicle membrane</location>
        <topology evidence="1">Multi-pass membrane protein</topology>
    </subcellularLocation>
</comment>
<comment type="similarity">
    <text evidence="4">Belongs to the SLC35G solute transporter family.</text>
</comment>
<protein>
    <recommendedName>
        <fullName>Solute carrier family 35 member G2</fullName>
    </recommendedName>
    <alternativeName>
        <fullName>Transmembrane protein 22</fullName>
    </alternativeName>
</protein>